<organism>
    <name type="scientific">Halalkalibacterium halodurans (strain ATCC BAA-125 / DSM 18197 / FERM 7344 / JCM 9153 / C-125)</name>
    <name type="common">Bacillus halodurans</name>
    <dbReference type="NCBI Taxonomy" id="272558"/>
    <lineage>
        <taxon>Bacteria</taxon>
        <taxon>Bacillati</taxon>
        <taxon>Bacillota</taxon>
        <taxon>Bacilli</taxon>
        <taxon>Bacillales</taxon>
        <taxon>Bacillaceae</taxon>
        <taxon>Halalkalibacterium (ex Joshi et al. 2022)</taxon>
    </lineage>
</organism>
<proteinExistence type="inferred from homology"/>
<gene>
    <name evidence="1" type="primary">queC</name>
    <name type="ordered locus">BH2244</name>
</gene>
<sequence length="223" mass="24962">MENKKKKAVVVFSGGQDSTTCLFWALKTFDEVATVTFDYGQRHAEEIECAKEIAEQLGVSFRVLDMTLLNQLTESALTREEIAVKDGENGELPSTFVPGRNQLFLSFAAVYAKQIGARHLVTGVCETDYSGYPDCRDVFIKSLNVTLNLAMDDQFVIHTPLMWLDKAETWKLADELGALDFVREKTLTCYHGIRGDGCGECPACMLRRRGLELYLAEKEGDRA</sequence>
<evidence type="ECO:0000255" key="1">
    <source>
        <dbReference type="HAMAP-Rule" id="MF_01633"/>
    </source>
</evidence>
<keyword id="KW-0067">ATP-binding</keyword>
<keyword id="KW-0436">Ligase</keyword>
<keyword id="KW-0479">Metal-binding</keyword>
<keyword id="KW-0547">Nucleotide-binding</keyword>
<keyword id="KW-0671">Queuosine biosynthesis</keyword>
<keyword id="KW-1185">Reference proteome</keyword>
<keyword id="KW-0862">Zinc</keyword>
<protein>
    <recommendedName>
        <fullName evidence="1">7-cyano-7-deazaguanine synthase</fullName>
        <ecNumber evidence="1">6.3.4.20</ecNumber>
    </recommendedName>
    <alternativeName>
        <fullName evidence="1">7-cyano-7-carbaguanine synthase</fullName>
    </alternativeName>
    <alternativeName>
        <fullName evidence="1">PreQ(0) synthase</fullName>
    </alternativeName>
    <alternativeName>
        <fullName evidence="1">Queuosine biosynthesis protein QueC</fullName>
    </alternativeName>
</protein>
<feature type="chain" id="PRO_0000246799" description="7-cyano-7-deazaguanine synthase">
    <location>
        <begin position="1"/>
        <end position="223"/>
    </location>
</feature>
<feature type="binding site" evidence="1">
    <location>
        <begin position="12"/>
        <end position="22"/>
    </location>
    <ligand>
        <name>ATP</name>
        <dbReference type="ChEBI" id="CHEBI:30616"/>
    </ligand>
</feature>
<feature type="binding site" evidence="1">
    <location>
        <position position="189"/>
    </location>
    <ligand>
        <name>Zn(2+)</name>
        <dbReference type="ChEBI" id="CHEBI:29105"/>
    </ligand>
</feature>
<feature type="binding site" evidence="1">
    <location>
        <position position="198"/>
    </location>
    <ligand>
        <name>Zn(2+)</name>
        <dbReference type="ChEBI" id="CHEBI:29105"/>
    </ligand>
</feature>
<feature type="binding site" evidence="1">
    <location>
        <position position="201"/>
    </location>
    <ligand>
        <name>Zn(2+)</name>
        <dbReference type="ChEBI" id="CHEBI:29105"/>
    </ligand>
</feature>
<feature type="binding site" evidence="1">
    <location>
        <position position="204"/>
    </location>
    <ligand>
        <name>Zn(2+)</name>
        <dbReference type="ChEBI" id="CHEBI:29105"/>
    </ligand>
</feature>
<reference key="1">
    <citation type="journal article" date="2000" name="Nucleic Acids Res.">
        <title>Complete genome sequence of the alkaliphilic bacterium Bacillus halodurans and genomic sequence comparison with Bacillus subtilis.</title>
        <authorList>
            <person name="Takami H."/>
            <person name="Nakasone K."/>
            <person name="Takaki Y."/>
            <person name="Maeno G."/>
            <person name="Sasaki R."/>
            <person name="Masui N."/>
            <person name="Fuji F."/>
            <person name="Hirama C."/>
            <person name="Nakamura Y."/>
            <person name="Ogasawara N."/>
            <person name="Kuhara S."/>
            <person name="Horikoshi K."/>
        </authorList>
    </citation>
    <scope>NUCLEOTIDE SEQUENCE [LARGE SCALE GENOMIC DNA]</scope>
    <source>
        <strain>ATCC BAA-125 / DSM 18197 / FERM 7344 / JCM 9153 / C-125</strain>
    </source>
</reference>
<accession>Q9KAP3</accession>
<name>QUEC_HALH5</name>
<comment type="function">
    <text evidence="1">Catalyzes the ATP-dependent conversion of 7-carboxy-7-deazaguanine (CDG) to 7-cyano-7-deazaguanine (preQ(0)).</text>
</comment>
<comment type="catalytic activity">
    <reaction evidence="1">
        <text>7-carboxy-7-deazaguanine + NH4(+) + ATP = 7-cyano-7-deazaguanine + ADP + phosphate + H2O + H(+)</text>
        <dbReference type="Rhea" id="RHEA:27982"/>
        <dbReference type="ChEBI" id="CHEBI:15377"/>
        <dbReference type="ChEBI" id="CHEBI:15378"/>
        <dbReference type="ChEBI" id="CHEBI:28938"/>
        <dbReference type="ChEBI" id="CHEBI:30616"/>
        <dbReference type="ChEBI" id="CHEBI:43474"/>
        <dbReference type="ChEBI" id="CHEBI:45075"/>
        <dbReference type="ChEBI" id="CHEBI:61036"/>
        <dbReference type="ChEBI" id="CHEBI:456216"/>
        <dbReference type="EC" id="6.3.4.20"/>
    </reaction>
</comment>
<comment type="cofactor">
    <cofactor evidence="1">
        <name>Zn(2+)</name>
        <dbReference type="ChEBI" id="CHEBI:29105"/>
    </cofactor>
    <text evidence="1">Binds 1 zinc ion per subunit.</text>
</comment>
<comment type="pathway">
    <text evidence="1">Purine metabolism; 7-cyano-7-deazaguanine biosynthesis.</text>
</comment>
<comment type="subunit">
    <text evidence="1">Homodimer.</text>
</comment>
<comment type="similarity">
    <text evidence="1">Belongs to the QueC family.</text>
</comment>
<dbReference type="EC" id="6.3.4.20" evidence="1"/>
<dbReference type="EMBL" id="BA000004">
    <property type="protein sequence ID" value="BAB05963.1"/>
    <property type="molecule type" value="Genomic_DNA"/>
</dbReference>
<dbReference type="PIR" id="D83930">
    <property type="entry name" value="D83930"/>
</dbReference>
<dbReference type="RefSeq" id="WP_010898400.1">
    <property type="nucleotide sequence ID" value="NC_002570.2"/>
</dbReference>
<dbReference type="SMR" id="Q9KAP3"/>
<dbReference type="STRING" id="272558.gene:10728142"/>
<dbReference type="GeneID" id="87597786"/>
<dbReference type="KEGG" id="bha:BH2244"/>
<dbReference type="eggNOG" id="COG0603">
    <property type="taxonomic scope" value="Bacteria"/>
</dbReference>
<dbReference type="HOGENOM" id="CLU_081854_0_0_9"/>
<dbReference type="OrthoDB" id="9789567at2"/>
<dbReference type="UniPathway" id="UPA00391"/>
<dbReference type="Proteomes" id="UP000001258">
    <property type="component" value="Chromosome"/>
</dbReference>
<dbReference type="GO" id="GO:0005524">
    <property type="term" value="F:ATP binding"/>
    <property type="evidence" value="ECO:0007669"/>
    <property type="project" value="UniProtKB-UniRule"/>
</dbReference>
<dbReference type="GO" id="GO:0016879">
    <property type="term" value="F:ligase activity, forming carbon-nitrogen bonds"/>
    <property type="evidence" value="ECO:0007669"/>
    <property type="project" value="UniProtKB-UniRule"/>
</dbReference>
<dbReference type="GO" id="GO:0008270">
    <property type="term" value="F:zinc ion binding"/>
    <property type="evidence" value="ECO:0007669"/>
    <property type="project" value="UniProtKB-UniRule"/>
</dbReference>
<dbReference type="GO" id="GO:0008616">
    <property type="term" value="P:queuosine biosynthetic process"/>
    <property type="evidence" value="ECO:0007669"/>
    <property type="project" value="UniProtKB-UniRule"/>
</dbReference>
<dbReference type="CDD" id="cd01995">
    <property type="entry name" value="QueC-like"/>
    <property type="match status" value="1"/>
</dbReference>
<dbReference type="FunFam" id="3.40.50.620:FF:000017">
    <property type="entry name" value="7-cyano-7-deazaguanine synthase"/>
    <property type="match status" value="1"/>
</dbReference>
<dbReference type="Gene3D" id="3.40.50.620">
    <property type="entry name" value="HUPs"/>
    <property type="match status" value="1"/>
</dbReference>
<dbReference type="HAMAP" id="MF_01633">
    <property type="entry name" value="QueC"/>
    <property type="match status" value="1"/>
</dbReference>
<dbReference type="InterPro" id="IPR018317">
    <property type="entry name" value="QueC"/>
</dbReference>
<dbReference type="InterPro" id="IPR014729">
    <property type="entry name" value="Rossmann-like_a/b/a_fold"/>
</dbReference>
<dbReference type="NCBIfam" id="TIGR00364">
    <property type="entry name" value="7-cyano-7-deazaguanine synthase QueC"/>
    <property type="match status" value="1"/>
</dbReference>
<dbReference type="PANTHER" id="PTHR42914">
    <property type="entry name" value="7-CYANO-7-DEAZAGUANINE SYNTHASE"/>
    <property type="match status" value="1"/>
</dbReference>
<dbReference type="PANTHER" id="PTHR42914:SF1">
    <property type="entry name" value="7-CYANO-7-DEAZAGUANINE SYNTHASE"/>
    <property type="match status" value="1"/>
</dbReference>
<dbReference type="Pfam" id="PF06508">
    <property type="entry name" value="QueC"/>
    <property type="match status" value="1"/>
</dbReference>
<dbReference type="PIRSF" id="PIRSF006293">
    <property type="entry name" value="ExsB"/>
    <property type="match status" value="1"/>
</dbReference>
<dbReference type="SUPFAM" id="SSF52402">
    <property type="entry name" value="Adenine nucleotide alpha hydrolases-like"/>
    <property type="match status" value="1"/>
</dbReference>